<name>GFCR_METLZ</name>
<accession>A2SRI7</accession>
<organism>
    <name type="scientific">Methanocorpusculum labreanum (strain ATCC 43576 / DSM 4855 / Z)</name>
    <dbReference type="NCBI Taxonomy" id="410358"/>
    <lineage>
        <taxon>Archaea</taxon>
        <taxon>Methanobacteriati</taxon>
        <taxon>Methanobacteriota</taxon>
        <taxon>Stenosarchaea group</taxon>
        <taxon>Methanomicrobia</taxon>
        <taxon>Methanomicrobiales</taxon>
        <taxon>Methanocorpusculaceae</taxon>
        <taxon>Methanocorpusculum</taxon>
    </lineage>
</organism>
<comment type="domain">
    <text evidence="1">Contains an N-terminal DNA-binding winged helix-turn-helix domain and a C-terminal regulatory domain (or effector binding domain) resembling phosphoribosyltransferase (PRT) domain.</text>
</comment>
<comment type="similarity">
    <text evidence="1">Belongs to the purine/pyrimidine phosphoribosyltransferase family. GfcR subfamily.</text>
</comment>
<feature type="chain" id="PRO_0000298898" description="Transcriptional regulator GfcR">
    <location>
        <begin position="1"/>
        <end position="198"/>
    </location>
</feature>
<evidence type="ECO:0000255" key="1">
    <source>
        <dbReference type="HAMAP-Rule" id="MF_01214"/>
    </source>
</evidence>
<reference key="1">
    <citation type="journal article" date="2009" name="Stand. Genomic Sci.">
        <title>Complete genome sequence of Methanocorpusculum labreanum type strain Z.</title>
        <authorList>
            <person name="Anderson I.J."/>
            <person name="Sieprawska-Lupa M."/>
            <person name="Goltsman E."/>
            <person name="Lapidus A."/>
            <person name="Copeland A."/>
            <person name="Glavina Del Rio T."/>
            <person name="Tice H."/>
            <person name="Dalin E."/>
            <person name="Barry K."/>
            <person name="Pitluck S."/>
            <person name="Hauser L."/>
            <person name="Land M."/>
            <person name="Lucas S."/>
            <person name="Richardson P."/>
            <person name="Whitman W.B."/>
            <person name="Kyrpides N.C."/>
        </authorList>
    </citation>
    <scope>NUCLEOTIDE SEQUENCE [LARGE SCALE GENOMIC DNA]</scope>
    <source>
        <strain>ATCC 43576 / DSM 4855 / Z</strain>
    </source>
</reference>
<proteinExistence type="inferred from homology"/>
<sequence>MSSLEELMAKAKDLHAEGHSSGQIADELSLSVDTVTWLLTQGKAGIAAPKDVHIDWTNVSSNTTLLGGISSMMLAHFEAANEEEEGVDAVIGISVSGVPLATMIAAEDGLNLAIYHPSKHNPEGKIGSISGNFSKVSQKRCLIVDDCITTGNTLTEIVNYLRRHKATPVGICVIFDKRGVKEIEGVPVYSLFTIKRID</sequence>
<protein>
    <recommendedName>
        <fullName evidence="1">Transcriptional regulator GfcR</fullName>
    </recommendedName>
</protein>
<gene>
    <name evidence="1" type="primary">gfcR</name>
    <name type="ordered locus">Mlab_0772</name>
</gene>
<keyword id="KW-0238">DNA-binding</keyword>
<keyword id="KW-1185">Reference proteome</keyword>
<keyword id="KW-0804">Transcription</keyword>
<keyword id="KW-0805">Transcription regulation</keyword>
<dbReference type="EMBL" id="CP000559">
    <property type="protein sequence ID" value="ABN06943.1"/>
    <property type="molecule type" value="Genomic_DNA"/>
</dbReference>
<dbReference type="RefSeq" id="WP_011833144.1">
    <property type="nucleotide sequence ID" value="NC_008942.1"/>
</dbReference>
<dbReference type="SMR" id="A2SRI7"/>
<dbReference type="STRING" id="410358.Mlab_0772"/>
<dbReference type="GeneID" id="4794844"/>
<dbReference type="KEGG" id="mla:Mlab_0772"/>
<dbReference type="eggNOG" id="arCOG00028">
    <property type="taxonomic scope" value="Archaea"/>
</dbReference>
<dbReference type="HOGENOM" id="CLU_111001_0_0_2"/>
<dbReference type="OrthoDB" id="68893at2157"/>
<dbReference type="Proteomes" id="UP000000365">
    <property type="component" value="Chromosome"/>
</dbReference>
<dbReference type="GO" id="GO:0003677">
    <property type="term" value="F:DNA binding"/>
    <property type="evidence" value="ECO:0007669"/>
    <property type="project" value="UniProtKB-UniRule"/>
</dbReference>
<dbReference type="GO" id="GO:0004588">
    <property type="term" value="F:orotate phosphoribosyltransferase activity"/>
    <property type="evidence" value="ECO:0007669"/>
    <property type="project" value="TreeGrafter"/>
</dbReference>
<dbReference type="GO" id="GO:0019856">
    <property type="term" value="P:pyrimidine nucleobase biosynthetic process"/>
    <property type="evidence" value="ECO:0007669"/>
    <property type="project" value="TreeGrafter"/>
</dbReference>
<dbReference type="GO" id="GO:0010468">
    <property type="term" value="P:regulation of gene expression"/>
    <property type="evidence" value="ECO:0007669"/>
    <property type="project" value="UniProtKB-UniRule"/>
</dbReference>
<dbReference type="GO" id="GO:0006222">
    <property type="term" value="P:UMP biosynthetic process"/>
    <property type="evidence" value="ECO:0007669"/>
    <property type="project" value="TreeGrafter"/>
</dbReference>
<dbReference type="CDD" id="cd06223">
    <property type="entry name" value="PRTases_typeI"/>
    <property type="match status" value="1"/>
</dbReference>
<dbReference type="Gene3D" id="3.40.50.2020">
    <property type="match status" value="1"/>
</dbReference>
<dbReference type="HAMAP" id="MF_01214">
    <property type="entry name" value="GfcR"/>
    <property type="match status" value="1"/>
</dbReference>
<dbReference type="InterPro" id="IPR022854">
    <property type="entry name" value="GfcR-like"/>
</dbReference>
<dbReference type="InterPro" id="IPR000836">
    <property type="entry name" value="PRibTrfase_dom"/>
</dbReference>
<dbReference type="InterPro" id="IPR029057">
    <property type="entry name" value="PRTase-like"/>
</dbReference>
<dbReference type="NCBIfam" id="NF002620">
    <property type="entry name" value="PRK02277.1"/>
    <property type="match status" value="1"/>
</dbReference>
<dbReference type="PANTHER" id="PTHR19278">
    <property type="entry name" value="OROTATE PHOSPHORIBOSYLTRANSFERASE"/>
    <property type="match status" value="1"/>
</dbReference>
<dbReference type="PANTHER" id="PTHR19278:SF41">
    <property type="entry name" value="PYRE-LIKE PROTEIN"/>
    <property type="match status" value="1"/>
</dbReference>
<dbReference type="Pfam" id="PF00156">
    <property type="entry name" value="Pribosyltran"/>
    <property type="match status" value="1"/>
</dbReference>
<dbReference type="SUPFAM" id="SSF53271">
    <property type="entry name" value="PRTase-like"/>
    <property type="match status" value="1"/>
</dbReference>